<comment type="function">
    <text evidence="1">Catalyzes the NAD(P)-dependent oxidation of 4-(phosphooxy)-L-threonine (HTP) into 2-amino-3-oxo-4-(phosphooxy)butyric acid which spontaneously decarboxylates to form 3-amino-2-oxopropyl phosphate (AHAP).</text>
</comment>
<comment type="catalytic activity">
    <reaction evidence="1">
        <text>4-(phosphooxy)-L-threonine + NAD(+) = 3-amino-2-oxopropyl phosphate + CO2 + NADH</text>
        <dbReference type="Rhea" id="RHEA:32275"/>
        <dbReference type="ChEBI" id="CHEBI:16526"/>
        <dbReference type="ChEBI" id="CHEBI:57279"/>
        <dbReference type="ChEBI" id="CHEBI:57540"/>
        <dbReference type="ChEBI" id="CHEBI:57945"/>
        <dbReference type="ChEBI" id="CHEBI:58452"/>
        <dbReference type="EC" id="1.1.1.262"/>
    </reaction>
</comment>
<comment type="cofactor">
    <cofactor evidence="1">
        <name>Zn(2+)</name>
        <dbReference type="ChEBI" id="CHEBI:29105"/>
    </cofactor>
    <cofactor evidence="1">
        <name>Mg(2+)</name>
        <dbReference type="ChEBI" id="CHEBI:18420"/>
    </cofactor>
    <cofactor evidence="1">
        <name>Co(2+)</name>
        <dbReference type="ChEBI" id="CHEBI:48828"/>
    </cofactor>
    <text evidence="1">Binds 1 divalent metal cation per subunit. Can use ions such as Zn(2+), Mg(2+) or Co(2+).</text>
</comment>
<comment type="pathway">
    <text evidence="1">Cofactor biosynthesis; pyridoxine 5'-phosphate biosynthesis; pyridoxine 5'-phosphate from D-erythrose 4-phosphate: step 4/5.</text>
</comment>
<comment type="subunit">
    <text evidence="1">Homodimer.</text>
</comment>
<comment type="subcellular location">
    <subcellularLocation>
        <location evidence="1">Cytoplasm</location>
    </subcellularLocation>
</comment>
<comment type="miscellaneous">
    <text evidence="1">The active site is located at the dimer interface.</text>
</comment>
<comment type="similarity">
    <text evidence="1">Belongs to the PdxA family.</text>
</comment>
<gene>
    <name evidence="1" type="primary">pdxA</name>
    <name type="ordered locus">Tgr7_2716</name>
</gene>
<reference key="1">
    <citation type="journal article" date="2011" name="Stand. Genomic Sci.">
        <title>Complete genome sequence of 'Thioalkalivibrio sulfidophilus' HL-EbGr7.</title>
        <authorList>
            <person name="Muyzer G."/>
            <person name="Sorokin D.Y."/>
            <person name="Mavromatis K."/>
            <person name="Lapidus A."/>
            <person name="Clum A."/>
            <person name="Ivanova N."/>
            <person name="Pati A."/>
            <person name="d'Haeseleer P."/>
            <person name="Woyke T."/>
            <person name="Kyrpides N.C."/>
        </authorList>
    </citation>
    <scope>NUCLEOTIDE SEQUENCE [LARGE SCALE GENOMIC DNA]</scope>
    <source>
        <strain>HL-EbGR7</strain>
    </source>
</reference>
<keyword id="KW-0170">Cobalt</keyword>
<keyword id="KW-0963">Cytoplasm</keyword>
<keyword id="KW-0460">Magnesium</keyword>
<keyword id="KW-0479">Metal-binding</keyword>
<keyword id="KW-0520">NAD</keyword>
<keyword id="KW-0521">NADP</keyword>
<keyword id="KW-0560">Oxidoreductase</keyword>
<keyword id="KW-0664">Pyridoxine biosynthesis</keyword>
<keyword id="KW-1185">Reference proteome</keyword>
<keyword id="KW-0862">Zinc</keyword>
<organism>
    <name type="scientific">Thioalkalivibrio sulfidiphilus (strain HL-EbGR7)</name>
    <dbReference type="NCBI Taxonomy" id="396588"/>
    <lineage>
        <taxon>Bacteria</taxon>
        <taxon>Pseudomonadati</taxon>
        <taxon>Pseudomonadota</taxon>
        <taxon>Gammaproteobacteria</taxon>
        <taxon>Chromatiales</taxon>
        <taxon>Ectothiorhodospiraceae</taxon>
        <taxon>Thioalkalivibrio</taxon>
    </lineage>
</organism>
<dbReference type="EC" id="1.1.1.262" evidence="1"/>
<dbReference type="EMBL" id="CP001339">
    <property type="protein sequence ID" value="ACL73791.1"/>
    <property type="molecule type" value="Genomic_DNA"/>
</dbReference>
<dbReference type="RefSeq" id="WP_012639266.1">
    <property type="nucleotide sequence ID" value="NC_011901.1"/>
</dbReference>
<dbReference type="SMR" id="B8GMX6"/>
<dbReference type="STRING" id="396588.Tgr7_2716"/>
<dbReference type="KEGG" id="tgr:Tgr7_2716"/>
<dbReference type="eggNOG" id="COG1995">
    <property type="taxonomic scope" value="Bacteria"/>
</dbReference>
<dbReference type="HOGENOM" id="CLU_040168_1_0_6"/>
<dbReference type="OrthoDB" id="9801783at2"/>
<dbReference type="UniPathway" id="UPA00244">
    <property type="reaction ID" value="UER00312"/>
</dbReference>
<dbReference type="Proteomes" id="UP000002383">
    <property type="component" value="Chromosome"/>
</dbReference>
<dbReference type="GO" id="GO:0005737">
    <property type="term" value="C:cytoplasm"/>
    <property type="evidence" value="ECO:0007669"/>
    <property type="project" value="UniProtKB-SubCell"/>
</dbReference>
<dbReference type="GO" id="GO:0050570">
    <property type="term" value="F:4-hydroxythreonine-4-phosphate dehydrogenase activity"/>
    <property type="evidence" value="ECO:0007669"/>
    <property type="project" value="UniProtKB-UniRule"/>
</dbReference>
<dbReference type="GO" id="GO:0050897">
    <property type="term" value="F:cobalt ion binding"/>
    <property type="evidence" value="ECO:0007669"/>
    <property type="project" value="UniProtKB-UniRule"/>
</dbReference>
<dbReference type="GO" id="GO:0000287">
    <property type="term" value="F:magnesium ion binding"/>
    <property type="evidence" value="ECO:0007669"/>
    <property type="project" value="UniProtKB-UniRule"/>
</dbReference>
<dbReference type="GO" id="GO:0051287">
    <property type="term" value="F:NAD binding"/>
    <property type="evidence" value="ECO:0007669"/>
    <property type="project" value="InterPro"/>
</dbReference>
<dbReference type="GO" id="GO:0008270">
    <property type="term" value="F:zinc ion binding"/>
    <property type="evidence" value="ECO:0007669"/>
    <property type="project" value="UniProtKB-UniRule"/>
</dbReference>
<dbReference type="GO" id="GO:0042823">
    <property type="term" value="P:pyridoxal phosphate biosynthetic process"/>
    <property type="evidence" value="ECO:0007669"/>
    <property type="project" value="UniProtKB-UniRule"/>
</dbReference>
<dbReference type="GO" id="GO:0008615">
    <property type="term" value="P:pyridoxine biosynthetic process"/>
    <property type="evidence" value="ECO:0007669"/>
    <property type="project" value="UniProtKB-UniRule"/>
</dbReference>
<dbReference type="Gene3D" id="3.40.718.10">
    <property type="entry name" value="Isopropylmalate Dehydrogenase"/>
    <property type="match status" value="1"/>
</dbReference>
<dbReference type="HAMAP" id="MF_00536">
    <property type="entry name" value="PdxA"/>
    <property type="match status" value="1"/>
</dbReference>
<dbReference type="InterPro" id="IPR037510">
    <property type="entry name" value="PdxA"/>
</dbReference>
<dbReference type="InterPro" id="IPR005255">
    <property type="entry name" value="PdxA_fam"/>
</dbReference>
<dbReference type="NCBIfam" id="TIGR00557">
    <property type="entry name" value="pdxA"/>
    <property type="match status" value="1"/>
</dbReference>
<dbReference type="PANTHER" id="PTHR30004">
    <property type="entry name" value="4-HYDROXYTHREONINE-4-PHOSPHATE DEHYDROGENASE"/>
    <property type="match status" value="1"/>
</dbReference>
<dbReference type="PANTHER" id="PTHR30004:SF5">
    <property type="entry name" value="4-HYDROXYTHREONINE-4-PHOSPHATE DEHYDROGENASE"/>
    <property type="match status" value="1"/>
</dbReference>
<dbReference type="Pfam" id="PF04166">
    <property type="entry name" value="PdxA"/>
    <property type="match status" value="1"/>
</dbReference>
<dbReference type="SUPFAM" id="SSF53659">
    <property type="entry name" value="Isocitrate/Isopropylmalate dehydrogenase-like"/>
    <property type="match status" value="1"/>
</dbReference>
<accession>B8GMX6</accession>
<protein>
    <recommendedName>
        <fullName evidence="1">4-hydroxythreonine-4-phosphate dehydrogenase</fullName>
        <ecNumber evidence="1">1.1.1.262</ecNumber>
    </recommendedName>
    <alternativeName>
        <fullName evidence="1">4-(phosphohydroxy)-L-threonine dehydrogenase</fullName>
    </alternativeName>
</protein>
<proteinExistence type="inferred from homology"/>
<name>PDXA_THISH</name>
<evidence type="ECO:0000255" key="1">
    <source>
        <dbReference type="HAMAP-Rule" id="MF_00536"/>
    </source>
</evidence>
<sequence length="331" mass="34662">MTTTPRIAITPGEPAGIGPDLVVAVAQVPCAAQRVVLSDPALLRERARLLGLPLEIRPFDPQTPAAPDPAGCLTVMAHALNAPVRPGHLDTANARHVLATLESAVAGCLDGRFDALVTGPVHKGIINDAGIPFTGHTEFLAERSGAPTPVMLLAAGALRVALATTHLPLRAVADAITPAGLEHVLRVLNQDLKTKFAISEPRILVCGLNPHAGEGGHLGREEIEVIGPVLERLRTQGLHLIGPLPADTLFTPRHLEHADAILAMYHDQGLPVLKHAGFGRAVNITLGLPLIRTSVDHGTALELAGSGRAEAGSFMEAERLAIEMARSAHGL</sequence>
<feature type="chain" id="PRO_1000146494" description="4-hydroxythreonine-4-phosphate dehydrogenase">
    <location>
        <begin position="1"/>
        <end position="331"/>
    </location>
</feature>
<feature type="binding site" evidence="1">
    <location>
        <position position="136"/>
    </location>
    <ligand>
        <name>substrate</name>
    </ligand>
</feature>
<feature type="binding site" evidence="1">
    <location>
        <position position="137"/>
    </location>
    <ligand>
        <name>substrate</name>
    </ligand>
</feature>
<feature type="binding site" evidence="1">
    <location>
        <position position="166"/>
    </location>
    <ligand>
        <name>a divalent metal cation</name>
        <dbReference type="ChEBI" id="CHEBI:60240"/>
        <note>ligand shared between dimeric partners</note>
    </ligand>
</feature>
<feature type="binding site" evidence="1">
    <location>
        <position position="211"/>
    </location>
    <ligand>
        <name>a divalent metal cation</name>
        <dbReference type="ChEBI" id="CHEBI:60240"/>
        <note>ligand shared between dimeric partners</note>
    </ligand>
</feature>
<feature type="binding site" evidence="1">
    <location>
        <position position="266"/>
    </location>
    <ligand>
        <name>a divalent metal cation</name>
        <dbReference type="ChEBI" id="CHEBI:60240"/>
        <note>ligand shared between dimeric partners</note>
    </ligand>
</feature>
<feature type="binding site" evidence="1">
    <location>
        <position position="274"/>
    </location>
    <ligand>
        <name>substrate</name>
    </ligand>
</feature>
<feature type="binding site" evidence="1">
    <location>
        <position position="283"/>
    </location>
    <ligand>
        <name>substrate</name>
    </ligand>
</feature>
<feature type="binding site" evidence="1">
    <location>
        <position position="292"/>
    </location>
    <ligand>
        <name>substrate</name>
    </ligand>
</feature>